<sequence>MNAVITVVGKDKVGIIHGVSGILNENNVNILNISQTIMDGYFTMIMLTDISNSTKDISSLKEIFKEFSLKNSLDISVQHEDIFNSMHRI</sequence>
<proteinExistence type="inferred from homology"/>
<gene>
    <name type="ordered locus">CPE1496</name>
</gene>
<comment type="similarity">
    <text evidence="1">Belongs to the UPF0237 family.</text>
</comment>
<dbReference type="EMBL" id="BA000016">
    <property type="protein sequence ID" value="BAB81202.1"/>
    <property type="molecule type" value="Genomic_DNA"/>
</dbReference>
<dbReference type="RefSeq" id="WP_003457144.1">
    <property type="nucleotide sequence ID" value="NC_003366.1"/>
</dbReference>
<dbReference type="SMR" id="Q8XKA4"/>
<dbReference type="STRING" id="195102.gene:10490760"/>
<dbReference type="KEGG" id="cpe:CPE1496"/>
<dbReference type="HOGENOM" id="CLU_155669_0_1_9"/>
<dbReference type="Proteomes" id="UP000000818">
    <property type="component" value="Chromosome"/>
</dbReference>
<dbReference type="CDD" id="cd04872">
    <property type="entry name" value="ACT_1ZPV"/>
    <property type="match status" value="1"/>
</dbReference>
<dbReference type="Gene3D" id="3.30.70.260">
    <property type="match status" value="1"/>
</dbReference>
<dbReference type="HAMAP" id="MF_01054">
    <property type="entry name" value="UPF0237"/>
    <property type="match status" value="1"/>
</dbReference>
<dbReference type="InterPro" id="IPR045865">
    <property type="entry name" value="ACT-like_dom_sf"/>
</dbReference>
<dbReference type="InterPro" id="IPR002912">
    <property type="entry name" value="ACT_dom"/>
</dbReference>
<dbReference type="InterPro" id="IPR050990">
    <property type="entry name" value="UPF0237/GcvR_regulator"/>
</dbReference>
<dbReference type="InterPro" id="IPR022986">
    <property type="entry name" value="UPF0237_ACT"/>
</dbReference>
<dbReference type="NCBIfam" id="NF001220">
    <property type="entry name" value="PRK00194.1"/>
    <property type="match status" value="1"/>
</dbReference>
<dbReference type="PANTHER" id="PTHR34875">
    <property type="entry name" value="UPF0237 PROTEIN MJ1558"/>
    <property type="match status" value="1"/>
</dbReference>
<dbReference type="PANTHER" id="PTHR34875:SF6">
    <property type="entry name" value="UPF0237 PROTEIN MJ1558"/>
    <property type="match status" value="1"/>
</dbReference>
<dbReference type="Pfam" id="PF13740">
    <property type="entry name" value="ACT_6"/>
    <property type="match status" value="1"/>
</dbReference>
<dbReference type="SUPFAM" id="SSF55021">
    <property type="entry name" value="ACT-like"/>
    <property type="match status" value="1"/>
</dbReference>
<dbReference type="PROSITE" id="PS51671">
    <property type="entry name" value="ACT"/>
    <property type="match status" value="1"/>
</dbReference>
<evidence type="ECO:0000255" key="1">
    <source>
        <dbReference type="HAMAP-Rule" id="MF_01054"/>
    </source>
</evidence>
<feature type="chain" id="PRO_0000219895" description="UPF0237 protein CPE1496">
    <location>
        <begin position="1"/>
        <end position="89"/>
    </location>
</feature>
<feature type="domain" description="ACT" evidence="1">
    <location>
        <begin position="4"/>
        <end position="84"/>
    </location>
</feature>
<organism>
    <name type="scientific">Clostridium perfringens (strain 13 / Type A)</name>
    <dbReference type="NCBI Taxonomy" id="195102"/>
    <lineage>
        <taxon>Bacteria</taxon>
        <taxon>Bacillati</taxon>
        <taxon>Bacillota</taxon>
        <taxon>Clostridia</taxon>
        <taxon>Eubacteriales</taxon>
        <taxon>Clostridiaceae</taxon>
        <taxon>Clostridium</taxon>
    </lineage>
</organism>
<accession>Q8XKA4</accession>
<name>Y1496_CLOPE</name>
<protein>
    <recommendedName>
        <fullName evidence="1">UPF0237 protein CPE1496</fullName>
    </recommendedName>
</protein>
<keyword id="KW-1185">Reference proteome</keyword>
<reference key="1">
    <citation type="journal article" date="2002" name="Proc. Natl. Acad. Sci. U.S.A.">
        <title>Complete genome sequence of Clostridium perfringens, an anaerobic flesh-eater.</title>
        <authorList>
            <person name="Shimizu T."/>
            <person name="Ohtani K."/>
            <person name="Hirakawa H."/>
            <person name="Ohshima K."/>
            <person name="Yamashita A."/>
            <person name="Shiba T."/>
            <person name="Ogasawara N."/>
            <person name="Hattori M."/>
            <person name="Kuhara S."/>
            <person name="Hayashi H."/>
        </authorList>
    </citation>
    <scope>NUCLEOTIDE SEQUENCE [LARGE SCALE GENOMIC DNA]</scope>
    <source>
        <strain>13 / Type A</strain>
    </source>
</reference>